<evidence type="ECO:0000250" key="1"/>
<evidence type="ECO:0000269" key="2">
    <source>
    </source>
</evidence>
<evidence type="ECO:0000305" key="3"/>
<organism>
    <name type="scientific">Cyprinus carpio</name>
    <name type="common">Common carp</name>
    <dbReference type="NCBI Taxonomy" id="7962"/>
    <lineage>
        <taxon>Eukaryota</taxon>
        <taxon>Metazoa</taxon>
        <taxon>Chordata</taxon>
        <taxon>Craniata</taxon>
        <taxon>Vertebrata</taxon>
        <taxon>Euteleostomi</taxon>
        <taxon>Actinopterygii</taxon>
        <taxon>Neopterygii</taxon>
        <taxon>Teleostei</taxon>
        <taxon>Ostariophysi</taxon>
        <taxon>Cypriniformes</taxon>
        <taxon>Cyprinidae</taxon>
        <taxon>Cyprininae</taxon>
        <taxon>Cyprinus</taxon>
    </lineage>
</organism>
<accession>P10298</accession>
<gene>
    <name type="primary">gh</name>
</gene>
<name>SOMA_CYPCA</name>
<feature type="signal peptide" evidence="2">
    <location>
        <begin position="1"/>
        <end position="23"/>
    </location>
</feature>
<feature type="chain" id="PRO_0000033020" description="Somatotropin">
    <location>
        <begin position="24"/>
        <end position="210"/>
    </location>
</feature>
<feature type="binding site" evidence="1">
    <location>
        <position position="38"/>
    </location>
    <ligand>
        <name>Zn(2+)</name>
        <dbReference type="ChEBI" id="CHEBI:29105"/>
    </ligand>
</feature>
<feature type="binding site" evidence="1">
    <location>
        <position position="192"/>
    </location>
    <ligand>
        <name>Zn(2+)</name>
        <dbReference type="ChEBI" id="CHEBI:29105"/>
    </ligand>
</feature>
<feature type="disulfide bond" evidence="1">
    <location>
        <begin position="71"/>
        <end position="183"/>
    </location>
</feature>
<feature type="disulfide bond" evidence="1">
    <location>
        <begin position="200"/>
        <end position="208"/>
    </location>
</feature>
<feature type="sequence conflict" description="In Ref. 3; CAA31963." evidence="3" ref="3">
    <original>V</original>
    <variation>A</variation>
    <location>
        <position position="4"/>
    </location>
</feature>
<feature type="sequence conflict" description="In Ref. 3; CAA31963." evidence="3" ref="3">
    <original>A</original>
    <variation>T</variation>
    <location>
        <position position="80"/>
    </location>
</feature>
<feature type="sequence conflict" description="In Ref. 3; CAA31963." evidence="3" ref="3">
    <original>H</original>
    <variation>R</variation>
    <location>
        <position position="99"/>
    </location>
</feature>
<feature type="sequence conflict" description="In Ref. 3; CAA31963." evidence="3" ref="3">
    <original>S</original>
    <variation>T</variation>
    <location>
        <position position="110"/>
    </location>
</feature>
<feature type="sequence conflict" description="In Ref. 3; CAA31963." evidence="3" ref="3">
    <original>L</original>
    <variation>I</variation>
    <location>
        <position position="127"/>
    </location>
</feature>
<feature type="sequence conflict" description="In Ref. 3; CAA31963." evidence="3" ref="3">
    <original>QA</original>
    <variation>KG</variation>
    <location>
        <begin position="143"/>
        <end position="144"/>
    </location>
</feature>
<sequence>MARVLVLLSVVLVSLLVNQGRASDNQRLFNNAVIRVQHLHQLAAKMINDFEDSLLPEERRQLSKIFPLSFCNSDYIEAPAGKDETQKSSMLKLLRISFHLIESWEFPSQSLSGTVSNSLTVGNPNQLTEKLADLKMGISVLIQACLDGQPNMDDNDSLPLPFEDFYLTMGENNLRESFRLLACFKKDMHKVETYLRVANCRRSLDSNCTL</sequence>
<protein>
    <recommendedName>
        <fullName>Somatotropin</fullName>
    </recommendedName>
    <alternativeName>
        <fullName>Growth hormone</fullName>
    </alternativeName>
</protein>
<reference key="1">
    <citation type="journal article" date="1990" name="Biochim. Biophys. Acta">
        <title>The complete nucleotide sequence of the growth-hormone gene from the common carp (Cyprinus carpio).</title>
        <authorList>
            <person name="Chiou C.S."/>
            <person name="Chen H.T."/>
            <person name="Chang W.-C."/>
        </authorList>
    </citation>
    <scope>NUCLEOTIDE SEQUENCE [GENOMIC DNA]</scope>
</reference>
<reference key="2">
    <citation type="journal article" date="1989" name="Gene">
        <title>Carp growth hormone: molecular cloning and sequencing of cDNA.</title>
        <authorList>
            <person name="Koren Y."/>
            <person name="Sarid S."/>
            <person name="Ber R."/>
            <person name="Daniel V."/>
        </authorList>
    </citation>
    <scope>NUCLEOTIDE SEQUENCE [MRNA]</scope>
    <source>
        <tissue>Pituitary</tissue>
    </source>
</reference>
<reference key="3">
    <citation type="journal article" date="1989" name="Biochim. Biophys. Acta">
        <title>Purification of carp growth hormone and cloning of the complementary DNA.</title>
        <authorList>
            <person name="Chao S.-C."/>
            <person name="Pan F.-M."/>
            <person name="Chang W.-C."/>
        </authorList>
    </citation>
    <scope>NUCLEOTIDE SEQUENCE [MRNA]</scope>
    <scope>PROTEIN SEQUENCE OF 24-56</scope>
    <source>
        <tissue>Pituitary</tissue>
    </source>
</reference>
<dbReference type="EMBL" id="X51969">
    <property type="protein sequence ID" value="CAA36228.1"/>
    <property type="molecule type" value="Genomic_DNA"/>
</dbReference>
<dbReference type="EMBL" id="M27000">
    <property type="protein sequence ID" value="AAA49208.1"/>
    <property type="molecule type" value="mRNA"/>
</dbReference>
<dbReference type="EMBL" id="X13670">
    <property type="protein sequence ID" value="CAA31963.1"/>
    <property type="molecule type" value="mRNA"/>
</dbReference>
<dbReference type="PIR" id="JS0180">
    <property type="entry name" value="JS0180"/>
</dbReference>
<dbReference type="PIR" id="S02764">
    <property type="entry name" value="S02764"/>
</dbReference>
<dbReference type="SMR" id="P10298"/>
<dbReference type="Ensembl" id="ENSCCRT00010062241.1">
    <property type="protein sequence ID" value="ENSCCRP00010056785.1"/>
    <property type="gene ID" value="ENSCCRG00010023755.1"/>
</dbReference>
<dbReference type="Ensembl" id="ENSCCRT00015066301.1">
    <property type="protein sequence ID" value="ENSCCRP00015064188.1"/>
    <property type="gene ID" value="ENSCCRG00015026164.1"/>
</dbReference>
<dbReference type="Ensembl" id="ENSCCRT00020064625.1">
    <property type="protein sequence ID" value="ENSCCRP00020058638.1"/>
    <property type="gene ID" value="ENSCCRG00020027818.1"/>
</dbReference>
<dbReference type="Ensembl" id="ENSCCRT00020064651.1">
    <property type="protein sequence ID" value="ENSCCRP00020058664.1"/>
    <property type="gene ID" value="ENSCCRG00020027818.1"/>
</dbReference>
<dbReference type="Ensembl" id="ENSCCRT00020064695.1">
    <property type="protein sequence ID" value="ENSCCRP00020058706.1"/>
    <property type="gene ID" value="ENSCCRG00020027818.1"/>
</dbReference>
<dbReference type="GeneID" id="109104194"/>
<dbReference type="KEGG" id="ccar:109081196"/>
<dbReference type="OMA" id="DINMRTD"/>
<dbReference type="OrthoDB" id="9925773at2759"/>
<dbReference type="Proteomes" id="UP000694384">
    <property type="component" value="Unplaced"/>
</dbReference>
<dbReference type="Proteomes" id="UP000694427">
    <property type="component" value="Unplaced"/>
</dbReference>
<dbReference type="Proteomes" id="UP000694700">
    <property type="component" value="Unplaced"/>
</dbReference>
<dbReference type="Proteomes" id="UP000694701">
    <property type="component" value="Unplaced"/>
</dbReference>
<dbReference type="Proteomes" id="UP001155660">
    <property type="component" value="Chromosome A3"/>
</dbReference>
<dbReference type="GO" id="GO:0005615">
    <property type="term" value="C:extracellular space"/>
    <property type="evidence" value="ECO:0007669"/>
    <property type="project" value="InterPro"/>
</dbReference>
<dbReference type="GO" id="GO:0070186">
    <property type="term" value="F:growth hormone activity"/>
    <property type="evidence" value="ECO:0007669"/>
    <property type="project" value="TreeGrafter"/>
</dbReference>
<dbReference type="GO" id="GO:0005131">
    <property type="term" value="F:growth hormone receptor binding"/>
    <property type="evidence" value="ECO:0007669"/>
    <property type="project" value="InterPro"/>
</dbReference>
<dbReference type="GO" id="GO:0046872">
    <property type="term" value="F:metal ion binding"/>
    <property type="evidence" value="ECO:0007669"/>
    <property type="project" value="UniProtKB-KW"/>
</dbReference>
<dbReference type="GO" id="GO:0048513">
    <property type="term" value="P:animal organ development"/>
    <property type="evidence" value="ECO:0007669"/>
    <property type="project" value="TreeGrafter"/>
</dbReference>
<dbReference type="GO" id="GO:0060396">
    <property type="term" value="P:growth hormone receptor signaling pathway"/>
    <property type="evidence" value="ECO:0007669"/>
    <property type="project" value="TreeGrafter"/>
</dbReference>
<dbReference type="GO" id="GO:0045927">
    <property type="term" value="P:positive regulation of growth"/>
    <property type="evidence" value="ECO:0007669"/>
    <property type="project" value="TreeGrafter"/>
</dbReference>
<dbReference type="GO" id="GO:0046427">
    <property type="term" value="P:positive regulation of receptor signaling pathway via JAK-STAT"/>
    <property type="evidence" value="ECO:0007669"/>
    <property type="project" value="TreeGrafter"/>
</dbReference>
<dbReference type="GO" id="GO:0031667">
    <property type="term" value="P:response to nutrient levels"/>
    <property type="evidence" value="ECO:0007669"/>
    <property type="project" value="TreeGrafter"/>
</dbReference>
<dbReference type="CDD" id="cd10285">
    <property type="entry name" value="somatotropin_like"/>
    <property type="match status" value="1"/>
</dbReference>
<dbReference type="FunFam" id="1.20.1250.10:FF:000009">
    <property type="entry name" value="Growth hormone"/>
    <property type="match status" value="1"/>
</dbReference>
<dbReference type="Gene3D" id="1.20.1250.10">
    <property type="match status" value="1"/>
</dbReference>
<dbReference type="InterPro" id="IPR009079">
    <property type="entry name" value="4_helix_cytokine-like_core"/>
</dbReference>
<dbReference type="InterPro" id="IPR034975">
    <property type="entry name" value="Somatotropin"/>
</dbReference>
<dbReference type="InterPro" id="IPR001400">
    <property type="entry name" value="Somatotropin/Prolactin"/>
</dbReference>
<dbReference type="InterPro" id="IPR018116">
    <property type="entry name" value="Somatotropin_CS"/>
</dbReference>
<dbReference type="PANTHER" id="PTHR11417:SF2">
    <property type="entry name" value="SOMATOTROPIN"/>
    <property type="match status" value="1"/>
</dbReference>
<dbReference type="PANTHER" id="PTHR11417">
    <property type="entry name" value="SOMATOTROPIN,PROLACTIN"/>
    <property type="match status" value="1"/>
</dbReference>
<dbReference type="Pfam" id="PF00103">
    <property type="entry name" value="Hormone_1"/>
    <property type="match status" value="1"/>
</dbReference>
<dbReference type="PRINTS" id="PR00836">
    <property type="entry name" value="SOMATOTROPIN"/>
</dbReference>
<dbReference type="SUPFAM" id="SSF47266">
    <property type="entry name" value="4-helical cytokines"/>
    <property type="match status" value="1"/>
</dbReference>
<dbReference type="PROSITE" id="PS00266">
    <property type="entry name" value="SOMATOTROPIN_1"/>
    <property type="match status" value="1"/>
</dbReference>
<dbReference type="PROSITE" id="PS00338">
    <property type="entry name" value="SOMATOTROPIN_2"/>
    <property type="match status" value="1"/>
</dbReference>
<keyword id="KW-0903">Direct protein sequencing</keyword>
<keyword id="KW-1015">Disulfide bond</keyword>
<keyword id="KW-0372">Hormone</keyword>
<keyword id="KW-0479">Metal-binding</keyword>
<keyword id="KW-1185">Reference proteome</keyword>
<keyword id="KW-0964">Secreted</keyword>
<keyword id="KW-0732">Signal</keyword>
<keyword id="KW-0862">Zinc</keyword>
<proteinExistence type="evidence at protein level"/>
<comment type="function">
    <text>Growth hormone plays an important role in growth control.</text>
</comment>
<comment type="subcellular location">
    <subcellularLocation>
        <location>Secreted</location>
    </subcellularLocation>
</comment>
<comment type="similarity">
    <text evidence="3">Belongs to the somatotropin/prolactin family.</text>
</comment>